<dbReference type="EC" id="3.4.11.4" evidence="1"/>
<dbReference type="EMBL" id="CP000727">
    <property type="protein sequence ID" value="ABS38409.1"/>
    <property type="molecule type" value="Genomic_DNA"/>
</dbReference>
<dbReference type="EMBL" id="AM412317">
    <property type="protein sequence ID" value="CAL81991.1"/>
    <property type="molecule type" value="Genomic_DNA"/>
</dbReference>
<dbReference type="RefSeq" id="WP_011948200.1">
    <property type="nucleotide sequence ID" value="NC_009698.1"/>
</dbReference>
<dbReference type="RefSeq" id="YP_001252982.1">
    <property type="nucleotide sequence ID" value="NC_009495.1"/>
</dbReference>
<dbReference type="RefSeq" id="YP_001386398.1">
    <property type="nucleotide sequence ID" value="NC_009698.1"/>
</dbReference>
<dbReference type="SMR" id="A5HYY2"/>
<dbReference type="MEROPS" id="M20.003"/>
<dbReference type="GeneID" id="5184693"/>
<dbReference type="KEGG" id="cbh:CLC_0513"/>
<dbReference type="KEGG" id="cbo:CBO0438"/>
<dbReference type="PATRIC" id="fig|413999.7.peg.442"/>
<dbReference type="HOGENOM" id="CLU_053676_0_0_9"/>
<dbReference type="PRO" id="PR:A5HYY2"/>
<dbReference type="Proteomes" id="UP000001986">
    <property type="component" value="Chromosome"/>
</dbReference>
<dbReference type="GO" id="GO:0005829">
    <property type="term" value="C:cytosol"/>
    <property type="evidence" value="ECO:0000318"/>
    <property type="project" value="GO_Central"/>
</dbReference>
<dbReference type="GO" id="GO:0008237">
    <property type="term" value="F:metallopeptidase activity"/>
    <property type="evidence" value="ECO:0007669"/>
    <property type="project" value="UniProtKB-KW"/>
</dbReference>
<dbReference type="GO" id="GO:0045148">
    <property type="term" value="F:tripeptide aminopeptidase activity"/>
    <property type="evidence" value="ECO:0000318"/>
    <property type="project" value="GO_Central"/>
</dbReference>
<dbReference type="GO" id="GO:0008270">
    <property type="term" value="F:zinc ion binding"/>
    <property type="evidence" value="ECO:0007669"/>
    <property type="project" value="UniProtKB-UniRule"/>
</dbReference>
<dbReference type="GO" id="GO:0043171">
    <property type="term" value="P:peptide catabolic process"/>
    <property type="evidence" value="ECO:0007669"/>
    <property type="project" value="UniProtKB-UniRule"/>
</dbReference>
<dbReference type="GO" id="GO:0006508">
    <property type="term" value="P:proteolysis"/>
    <property type="evidence" value="ECO:0007669"/>
    <property type="project" value="UniProtKB-UniRule"/>
</dbReference>
<dbReference type="CDD" id="cd03892">
    <property type="entry name" value="M20_peptT"/>
    <property type="match status" value="1"/>
</dbReference>
<dbReference type="FunFam" id="3.30.70.360:FF:000002">
    <property type="entry name" value="Peptidase T"/>
    <property type="match status" value="1"/>
</dbReference>
<dbReference type="Gene3D" id="3.30.70.360">
    <property type="match status" value="1"/>
</dbReference>
<dbReference type="Gene3D" id="3.40.630.10">
    <property type="entry name" value="Zn peptidases"/>
    <property type="match status" value="1"/>
</dbReference>
<dbReference type="HAMAP" id="MF_00550">
    <property type="entry name" value="Aminopeptidase_M20"/>
    <property type="match status" value="1"/>
</dbReference>
<dbReference type="InterPro" id="IPR001261">
    <property type="entry name" value="ArgE/DapE_CS"/>
</dbReference>
<dbReference type="InterPro" id="IPR036264">
    <property type="entry name" value="Bact_exopeptidase_dim_dom"/>
</dbReference>
<dbReference type="InterPro" id="IPR002933">
    <property type="entry name" value="Peptidase_M20"/>
</dbReference>
<dbReference type="InterPro" id="IPR011650">
    <property type="entry name" value="Peptidase_M20_dimer"/>
</dbReference>
<dbReference type="InterPro" id="IPR010161">
    <property type="entry name" value="Peptidase_M20B"/>
</dbReference>
<dbReference type="NCBIfam" id="TIGR01882">
    <property type="entry name" value="peptidase-T"/>
    <property type="match status" value="1"/>
</dbReference>
<dbReference type="NCBIfam" id="NF003976">
    <property type="entry name" value="PRK05469.1"/>
    <property type="match status" value="1"/>
</dbReference>
<dbReference type="NCBIfam" id="NF009920">
    <property type="entry name" value="PRK13381.1"/>
    <property type="match status" value="1"/>
</dbReference>
<dbReference type="PANTHER" id="PTHR42994">
    <property type="entry name" value="PEPTIDASE T"/>
    <property type="match status" value="1"/>
</dbReference>
<dbReference type="PANTHER" id="PTHR42994:SF1">
    <property type="entry name" value="PEPTIDASE T"/>
    <property type="match status" value="1"/>
</dbReference>
<dbReference type="Pfam" id="PF07687">
    <property type="entry name" value="M20_dimer"/>
    <property type="match status" value="1"/>
</dbReference>
<dbReference type="Pfam" id="PF01546">
    <property type="entry name" value="Peptidase_M20"/>
    <property type="match status" value="1"/>
</dbReference>
<dbReference type="PIRSF" id="PIRSF037215">
    <property type="entry name" value="Peptidase_M20B"/>
    <property type="match status" value="1"/>
</dbReference>
<dbReference type="SUPFAM" id="SSF55031">
    <property type="entry name" value="Bacterial exopeptidase dimerisation domain"/>
    <property type="match status" value="1"/>
</dbReference>
<dbReference type="SUPFAM" id="SSF53187">
    <property type="entry name" value="Zn-dependent exopeptidases"/>
    <property type="match status" value="1"/>
</dbReference>
<dbReference type="PROSITE" id="PS00758">
    <property type="entry name" value="ARGE_DAPE_CPG2_1"/>
    <property type="match status" value="1"/>
</dbReference>
<dbReference type="PROSITE" id="PS00759">
    <property type="entry name" value="ARGE_DAPE_CPG2_2"/>
    <property type="match status" value="1"/>
</dbReference>
<evidence type="ECO:0000255" key="1">
    <source>
        <dbReference type="HAMAP-Rule" id="MF_00550"/>
    </source>
</evidence>
<reference key="1">
    <citation type="journal article" date="2007" name="Genome Res.">
        <title>Genome sequence of a proteolytic (Group I) Clostridium botulinum strain Hall A and comparative analysis of the clostridial genomes.</title>
        <authorList>
            <person name="Sebaihia M."/>
            <person name="Peck M.W."/>
            <person name="Minton N.P."/>
            <person name="Thomson N.R."/>
            <person name="Holden M.T.G."/>
            <person name="Mitchell W.J."/>
            <person name="Carter A.T."/>
            <person name="Bentley S.D."/>
            <person name="Mason D.R."/>
            <person name="Crossman L."/>
            <person name="Paul C.J."/>
            <person name="Ivens A."/>
            <person name="Wells-Bennik M.H.J."/>
            <person name="Davis I.J."/>
            <person name="Cerdeno-Tarraga A.M."/>
            <person name="Churcher C."/>
            <person name="Quail M.A."/>
            <person name="Chillingworth T."/>
            <person name="Feltwell T."/>
            <person name="Fraser A."/>
            <person name="Goodhead I."/>
            <person name="Hance Z."/>
            <person name="Jagels K."/>
            <person name="Larke N."/>
            <person name="Maddison M."/>
            <person name="Moule S."/>
            <person name="Mungall K."/>
            <person name="Norbertczak H."/>
            <person name="Rabbinowitsch E."/>
            <person name="Sanders M."/>
            <person name="Simmonds M."/>
            <person name="White B."/>
            <person name="Whithead S."/>
            <person name="Parkhill J."/>
        </authorList>
    </citation>
    <scope>NUCLEOTIDE SEQUENCE [LARGE SCALE GENOMIC DNA]</scope>
    <source>
        <strain>Hall / ATCC 3502 / NCTC 13319 / Type A</strain>
    </source>
</reference>
<reference key="2">
    <citation type="journal article" date="2007" name="PLoS ONE">
        <title>Analysis of the neurotoxin complex genes in Clostridium botulinum A1-A4 and B1 strains: BoNT/A3, /Ba4 and /B1 clusters are located within plasmids.</title>
        <authorList>
            <person name="Smith T.J."/>
            <person name="Hill K.K."/>
            <person name="Foley B.T."/>
            <person name="Detter J.C."/>
            <person name="Munk A.C."/>
            <person name="Bruce D.C."/>
            <person name="Doggett N.A."/>
            <person name="Smith L.A."/>
            <person name="Marks J.D."/>
            <person name="Xie G."/>
            <person name="Brettin T.S."/>
        </authorList>
    </citation>
    <scope>NUCLEOTIDE SEQUENCE [LARGE SCALE GENOMIC DNA]</scope>
    <source>
        <strain>Hall / ATCC 3502 / NCTC 13319 / Type A</strain>
    </source>
</reference>
<accession>A5HYY2</accession>
<accession>A7G0X9</accession>
<protein>
    <recommendedName>
        <fullName evidence="1">Peptidase T</fullName>
        <ecNumber evidence="1">3.4.11.4</ecNumber>
    </recommendedName>
    <alternativeName>
        <fullName evidence="1">Aminotripeptidase</fullName>
        <shortName evidence="1">Tripeptidase</shortName>
    </alternativeName>
    <alternativeName>
        <fullName evidence="1">Tripeptide aminopeptidase</fullName>
    </alternativeName>
</protein>
<organism>
    <name type="scientific">Clostridium botulinum (strain Hall / ATCC 3502 / NCTC 13319 / Type A)</name>
    <dbReference type="NCBI Taxonomy" id="441771"/>
    <lineage>
        <taxon>Bacteria</taxon>
        <taxon>Bacillati</taxon>
        <taxon>Bacillota</taxon>
        <taxon>Clostridia</taxon>
        <taxon>Eubacteriales</taxon>
        <taxon>Clostridiaceae</taxon>
        <taxon>Clostridium</taxon>
    </lineage>
</organism>
<name>PEPT_CLOBH</name>
<gene>
    <name evidence="1" type="primary">pepT</name>
    <name type="ordered locus">CBO0438</name>
    <name type="ordered locus">CLC_0513</name>
</gene>
<keyword id="KW-0031">Aminopeptidase</keyword>
<keyword id="KW-0963">Cytoplasm</keyword>
<keyword id="KW-0378">Hydrolase</keyword>
<keyword id="KW-0479">Metal-binding</keyword>
<keyword id="KW-0482">Metalloprotease</keyword>
<keyword id="KW-0645">Protease</keyword>
<keyword id="KW-1185">Reference proteome</keyword>
<keyword id="KW-0862">Zinc</keyword>
<sequence>MKDVLERFLGYIKVDTQSSEESDTVPTTKTQLEFAKKLGEELKAIGLKDVSVDENGYVMATLESNIDKKVPTIGFIAHMDTSPDLSGTNINPRIVEKYDGQDIVLNKEKNIVLKINEFPEILEYKGQDIVVTDGNTLLGADDKAGIAEIITAMEYLINHPEIKHGTIKVGFTPDEEVGKGADHFDVKKFGADLAYTLDGGGIGELECETFNAAKAKVIIEGRNVHPGSAKNKMTNAVLVANKFINMLPENEVPERTEGYEGFFHLLSVKSEVETAELNYIIRDFDRKKFEERKEQIKEVGKKINEEYNKEIVCVKVEDQYYNMKEKIDEVKYVVDIAYDAMKAIDIEPILVPIRGGTDGSRLSFMGLPTPNLFAGGHNFHGRFEFVPVLSMEKAAELVVKIAELYANR</sequence>
<comment type="function">
    <text evidence="1">Cleaves the N-terminal amino acid of tripeptides.</text>
</comment>
<comment type="catalytic activity">
    <reaction evidence="1">
        <text>Release of the N-terminal residue from a tripeptide.</text>
        <dbReference type="EC" id="3.4.11.4"/>
    </reaction>
</comment>
<comment type="cofactor">
    <cofactor evidence="1">
        <name>Zn(2+)</name>
        <dbReference type="ChEBI" id="CHEBI:29105"/>
    </cofactor>
    <text evidence="1">Binds 2 Zn(2+) ions per subunit.</text>
</comment>
<comment type="subcellular location">
    <subcellularLocation>
        <location evidence="1">Cytoplasm</location>
    </subcellularLocation>
</comment>
<comment type="similarity">
    <text evidence="1">Belongs to the peptidase M20B family.</text>
</comment>
<proteinExistence type="inferred from homology"/>
<feature type="chain" id="PRO_1000017841" description="Peptidase T">
    <location>
        <begin position="1"/>
        <end position="408"/>
    </location>
</feature>
<feature type="active site" evidence="1">
    <location>
        <position position="80"/>
    </location>
</feature>
<feature type="active site" description="Proton acceptor" evidence="1">
    <location>
        <position position="175"/>
    </location>
</feature>
<feature type="binding site" evidence="1">
    <location>
        <position position="78"/>
    </location>
    <ligand>
        <name>Zn(2+)</name>
        <dbReference type="ChEBI" id="CHEBI:29105"/>
        <label>1</label>
    </ligand>
</feature>
<feature type="binding site" evidence="1">
    <location>
        <position position="141"/>
    </location>
    <ligand>
        <name>Zn(2+)</name>
        <dbReference type="ChEBI" id="CHEBI:29105"/>
        <label>1</label>
    </ligand>
</feature>
<feature type="binding site" evidence="1">
    <location>
        <position position="141"/>
    </location>
    <ligand>
        <name>Zn(2+)</name>
        <dbReference type="ChEBI" id="CHEBI:29105"/>
        <label>2</label>
    </ligand>
</feature>
<feature type="binding site" evidence="1">
    <location>
        <position position="176"/>
    </location>
    <ligand>
        <name>Zn(2+)</name>
        <dbReference type="ChEBI" id="CHEBI:29105"/>
        <label>2</label>
    </ligand>
</feature>
<feature type="binding site" evidence="1">
    <location>
        <position position="198"/>
    </location>
    <ligand>
        <name>Zn(2+)</name>
        <dbReference type="ChEBI" id="CHEBI:29105"/>
        <label>1</label>
    </ligand>
</feature>
<feature type="binding site" evidence="1">
    <location>
        <position position="380"/>
    </location>
    <ligand>
        <name>Zn(2+)</name>
        <dbReference type="ChEBI" id="CHEBI:29105"/>
        <label>2</label>
    </ligand>
</feature>